<dbReference type="EMBL" id="M17710">
    <property type="protein sequence ID" value="AAA46640.1"/>
    <property type="molecule type" value="mRNA"/>
</dbReference>
<dbReference type="EMBL" id="M24703">
    <property type="protein sequence ID" value="AAA46653.1"/>
    <property type="status" value="ALT_SEQ"/>
    <property type="molecule type" value="Genomic_RNA"/>
</dbReference>
<dbReference type="PIR" id="B36830">
    <property type="entry name" value="B36830"/>
</dbReference>
<dbReference type="SMR" id="P14623"/>
<dbReference type="GlyCosmos" id="P14623">
    <property type="glycosylation" value="5 sites, No reported glycans"/>
</dbReference>
<dbReference type="GO" id="GO:0020002">
    <property type="term" value="C:host cell plasma membrane"/>
    <property type="evidence" value="ECO:0007669"/>
    <property type="project" value="UniProtKB-SubCell"/>
</dbReference>
<dbReference type="GO" id="GO:0016020">
    <property type="term" value="C:membrane"/>
    <property type="evidence" value="ECO:0007669"/>
    <property type="project" value="UniProtKB-KW"/>
</dbReference>
<dbReference type="GO" id="GO:0019031">
    <property type="term" value="C:viral envelope"/>
    <property type="evidence" value="ECO:0007669"/>
    <property type="project" value="UniProtKB-KW"/>
</dbReference>
<dbReference type="GO" id="GO:0055036">
    <property type="term" value="C:virion membrane"/>
    <property type="evidence" value="ECO:0007669"/>
    <property type="project" value="UniProtKB-SubCell"/>
</dbReference>
<dbReference type="GO" id="GO:0019064">
    <property type="term" value="P:fusion of virus membrane with host plasma membrane"/>
    <property type="evidence" value="ECO:0007669"/>
    <property type="project" value="UniProtKB-KW"/>
</dbReference>
<dbReference type="GO" id="GO:0046718">
    <property type="term" value="P:symbiont entry into host cell"/>
    <property type="evidence" value="ECO:0007669"/>
    <property type="project" value="UniProtKB-KW"/>
</dbReference>
<dbReference type="Gene3D" id="1.10.287.2480">
    <property type="match status" value="1"/>
</dbReference>
<dbReference type="Gene3D" id="6.10.10.110">
    <property type="match status" value="1"/>
</dbReference>
<dbReference type="Gene3D" id="2.60.40.1690">
    <property type="entry name" value="Head and neck region of the ectodomain of NDV fusion glycoprotein"/>
    <property type="match status" value="1"/>
</dbReference>
<dbReference type="Gene3D" id="2.40.490.10">
    <property type="entry name" value="Newcastle disease virus like domain"/>
    <property type="match status" value="1"/>
</dbReference>
<dbReference type="InterPro" id="IPR000776">
    <property type="entry name" value="Fusion_F0_Paramyxovir"/>
</dbReference>
<dbReference type="Pfam" id="PF00523">
    <property type="entry name" value="Fusion_gly"/>
    <property type="match status" value="1"/>
</dbReference>
<dbReference type="SUPFAM" id="SSF69922">
    <property type="entry name" value="Head and neck region of the ectodomain of NDV fusion glycoprotein"/>
    <property type="match status" value="1"/>
</dbReference>
<dbReference type="SUPFAM" id="SSF58069">
    <property type="entry name" value="Virus ectodomain"/>
    <property type="match status" value="1"/>
</dbReference>
<organismHost>
    <name type="scientific">Gallus gallus</name>
    <name type="common">Chicken</name>
    <dbReference type="NCBI Taxonomy" id="9031"/>
</organismHost>
<proteinExistence type="evidence at transcript level"/>
<keyword id="KW-0165">Cleavage on pair of basic residues</keyword>
<keyword id="KW-0175">Coiled coil</keyword>
<keyword id="KW-1015">Disulfide bond</keyword>
<keyword id="KW-1169">Fusion of virus membrane with host cell membrane</keyword>
<keyword id="KW-1168">Fusion of virus membrane with host membrane</keyword>
<keyword id="KW-0325">Glycoprotein</keyword>
<keyword id="KW-1032">Host cell membrane</keyword>
<keyword id="KW-1043">Host membrane</keyword>
<keyword id="KW-0449">Lipoprotein</keyword>
<keyword id="KW-0472">Membrane</keyword>
<keyword id="KW-0564">Palmitate</keyword>
<keyword id="KW-0732">Signal</keyword>
<keyword id="KW-0812">Transmembrane</keyword>
<keyword id="KW-1133">Transmembrane helix</keyword>
<keyword id="KW-0261">Viral envelope protein</keyword>
<keyword id="KW-1162">Viral penetration into host cytoplasm</keyword>
<keyword id="KW-0946">Virion</keyword>
<keyword id="KW-1160">Virus entry into host cell</keyword>
<gene>
    <name type="primary">F</name>
</gene>
<feature type="signal peptide" evidence="2">
    <location>
        <begin position="1"/>
        <end position="31"/>
    </location>
</feature>
<feature type="chain" id="PRO_0000039306" description="Fusion glycoprotein F0">
    <location>
        <begin position="32"/>
        <end position="553"/>
    </location>
</feature>
<feature type="chain" id="PRO_0000039307" description="Fusion glycoprotein F2">
    <location>
        <begin position="32"/>
        <end position="116"/>
    </location>
</feature>
<feature type="chain" id="PRO_0000039308" description="Fusion glycoprotein F1">
    <location>
        <begin position="117"/>
        <end position="553"/>
    </location>
</feature>
<feature type="topological domain" description="Extracellular" evidence="1">
    <location>
        <begin position="32"/>
        <end position="500"/>
    </location>
</feature>
<feature type="transmembrane region" description="Helical" evidence="1">
    <location>
        <begin position="501"/>
        <end position="521"/>
    </location>
</feature>
<feature type="topological domain" description="Cytoplasmic" evidence="1">
    <location>
        <begin position="522"/>
        <end position="553"/>
    </location>
</feature>
<feature type="region of interest" description="Fusion peptide" evidence="1">
    <location>
        <begin position="117"/>
        <end position="141"/>
    </location>
</feature>
<feature type="coiled-coil region" evidence="2">
    <location>
        <begin position="142"/>
        <end position="170"/>
    </location>
</feature>
<feature type="coiled-coil region" evidence="2">
    <location>
        <begin position="466"/>
        <end position="491"/>
    </location>
</feature>
<feature type="site" description="Cleavage; by host" evidence="1">
    <location>
        <begin position="116"/>
        <end position="117"/>
    </location>
</feature>
<feature type="lipid moiety-binding region" description="S-palmitoyl cysteine; by host" evidence="2">
    <location>
        <position position="523"/>
    </location>
</feature>
<feature type="glycosylation site" description="N-linked (GlcNAc...) asparagine; by host" evidence="2">
    <location>
        <position position="85"/>
    </location>
</feature>
<feature type="glycosylation site" description="N-linked (GlcNAc...) asparagine; by host" evidence="2">
    <location>
        <position position="191"/>
    </location>
</feature>
<feature type="glycosylation site" description="N-linked (GlcNAc...) asparagine; by host" evidence="2">
    <location>
        <position position="366"/>
    </location>
</feature>
<feature type="glycosylation site" description="N-linked (GlcNAc...) asparagine; by host" evidence="2">
    <location>
        <position position="447"/>
    </location>
</feature>
<feature type="glycosylation site" description="N-linked (GlcNAc...) asparagine; by host" evidence="2">
    <location>
        <position position="471"/>
    </location>
</feature>
<feature type="disulfide bond" description="Interchain (between F2 and F1 chains)" evidence="1">
    <location>
        <begin position="76"/>
        <end position="199"/>
    </location>
</feature>
<feature type="disulfide bond" evidence="1">
    <location>
        <begin position="338"/>
        <end position="347"/>
    </location>
</feature>
<feature type="disulfide bond" evidence="1">
    <location>
        <begin position="362"/>
        <end position="370"/>
    </location>
</feature>
<feature type="disulfide bond" evidence="1">
    <location>
        <begin position="394"/>
        <end position="399"/>
    </location>
</feature>
<feature type="disulfide bond" evidence="1">
    <location>
        <begin position="401"/>
        <end position="424"/>
    </location>
</feature>
<feature type="sequence conflict" description="In Ref. 2." evidence="3" ref="2">
    <original>SP</original>
    <variation>LS</variation>
    <location>
        <begin position="289"/>
        <end position="290"/>
    </location>
</feature>
<feature type="sequence conflict" description="In Ref. 2; AAA46653." evidence="3" ref="2">
    <original>M</original>
    <variation>I</variation>
    <location>
        <position position="339"/>
    </location>
</feature>
<feature type="sequence conflict" description="In Ref. 2; AAA46653." evidence="3" ref="2">
    <original>L</original>
    <variation>V</variation>
    <location>
        <position position="491"/>
    </location>
</feature>
<name>FUS_NDVI</name>
<comment type="function">
    <text evidence="1">Class I viral fusion protein. Under the current model, the protein has at least 3 conformational states: pre-fusion native state, pre-hairpin intermediate state, and post-fusion hairpin state. During viral and plasma cell membrane fusion, the heptad repeat (HR) regions assume a trimer-of-hairpins structure, positioning the fusion peptide in close proximity to the C-terminal region of the ectodomain. The formation of this structure appears to drive apposition and subsequent fusion of viral and plasma cell membranes. Directs fusion of viral and cellular membranes leading to delivery of the nucleocapsid into the cytoplasm. This fusion is pH independent and occurs directly at the outer cell membrane. The trimer of F1-F2 (F protein) probably interacts with HN at the virion surface. Upon HN binding to its cellular receptor, the hydrophobic fusion peptide is unmasked and interacts with the cellular membrane, inducing the fusion between cell and virion membranes. Later in infection, F proteins expressed at the plasma membrane of infected cells could mediate fusion with adjacent cells to form syncytia, a cytopathic effect that could lead to tissue necrosis (By similarity).</text>
</comment>
<comment type="subunit">
    <text evidence="1">Homotrimer of disulfide-linked F1-F2.</text>
</comment>
<comment type="subcellular location">
    <subcellularLocation>
        <location evidence="1">Virion membrane</location>
        <topology evidence="1">Single-pass type I membrane protein</topology>
    </subcellularLocation>
    <subcellularLocation>
        <location evidence="1">Host cell membrane</location>
        <topology evidence="1">Single-pass membrane protein</topology>
    </subcellularLocation>
</comment>
<comment type="PTM">
    <text evidence="1">The inactive precursor F0 is glycosylated and proteolytically cleaved into F1 and F2 to be functionally active. The cleavage is mediated by cellular proteases during the transport and maturation of the polypeptide (By similarity).</text>
</comment>
<comment type="similarity">
    <text evidence="3">Belongs to the paramyxoviruses fusion glycoprotein family.</text>
</comment>
<accession>P14623</accession>
<evidence type="ECO:0000250" key="1"/>
<evidence type="ECO:0000255" key="2"/>
<evidence type="ECO:0000305" key="3"/>
<sequence>MRSRSSTRIPVPLMLIIRIALTLSCIRLTSSLDGRPLAAAGIVVTGDKAVDIYTSSQTGSIIVKLLPNMPKDKEACAKAPLEAYNRTLTTLLTPLGDSIRRIQESVTTSGGRRQRRFIGAIIGSVALGVATPAQITAASALIQANQNAANILRLKESIAATNEAVHEVTDGLSQLAVAVGKMQQFVNDQFNNTAQQLDCIKITQQVGVELNLYLTELTTVFGPQITSPALTPLTIQALYNLAGGNMDYLLTKLGVGNNQLSSLIGSGLITGNPILYDSQTQILGIQITSPSVGNLNNMRATYLETLSVSTTKGFASALVPKVVTQVGSVIEELDTSYCMETDLDLYCTRIVTFPMSPGIYSCLSGNTSACMYSKTEGALTTPYMALKGSVIANCKMTTCRCADPPGIISQNYGEAVSLIDRHSCNVLSLDGITLRLSGEFDATYQKNISILDSQVIVTGNLDISTELGNVNNSISNALNKLEESNSKLDKLNVKLTSTSALITYIVLTVISLVFGVLSLVLACYLMYKQKAQQKTLLWLGNNTLDQMRATTKI</sequence>
<reference key="1">
    <citation type="journal article" date="1987" name="Arch. Virol.">
        <title>Expression at the cell surface of native fusion protein of the Newcastle disease virus (NDV) strain Italien from cloned cDNA.</title>
        <authorList>
            <person name="Espion D."/>
            <person name="de Henau S."/>
            <person name="Letellier C."/>
            <person name="Wemers C.-D."/>
            <person name="Brasseur R."/>
            <person name="Young J.F."/>
            <person name="Gross M."/>
            <person name="Rosenberg M."/>
            <person name="Meulemans G."/>
            <person name="Burny A."/>
        </authorList>
    </citation>
    <scope>NUCLEOTIDE SEQUENCE [MRNA]</scope>
</reference>
<reference key="2">
    <citation type="journal article" date="1989" name="Virology">
        <title>Newcastle disease virus evolution. II. Lack of gene recombination in generating virulent and avirulent strains.</title>
        <authorList>
            <person name="Toyoda T."/>
            <person name="Sakaguchi T."/>
            <person name="Hirota H."/>
            <person name="Gotoh B."/>
            <person name="Kuma K."/>
            <person name="Miyata T."/>
            <person name="Nagai Y."/>
        </authorList>
    </citation>
    <scope>NUCLEOTIDE SEQUENCE [GENOMIC RNA]</scope>
</reference>
<protein>
    <recommendedName>
        <fullName>Fusion glycoprotein F0</fullName>
    </recommendedName>
    <component>
        <recommendedName>
            <fullName>Fusion glycoprotein F2</fullName>
        </recommendedName>
    </component>
    <component>
        <recommendedName>
            <fullName>Fusion glycoprotein F1</fullName>
        </recommendedName>
    </component>
</protein>
<organism>
    <name type="scientific">Newcastle disease virus (strain Italien/45)</name>
    <name type="common">NDV</name>
    <dbReference type="NCBI Taxonomy" id="11182"/>
    <lineage>
        <taxon>Viruses</taxon>
        <taxon>Riboviria</taxon>
        <taxon>Orthornavirae</taxon>
        <taxon>Negarnaviricota</taxon>
        <taxon>Haploviricotina</taxon>
        <taxon>Monjiviricetes</taxon>
        <taxon>Mononegavirales</taxon>
        <taxon>Paramyxoviridae</taxon>
        <taxon>Avulavirinae</taxon>
        <taxon>Orthoavulavirus</taxon>
        <taxon>Orthoavulavirus javaense</taxon>
        <taxon>Avian paramyxovirus 1</taxon>
    </lineage>
</organism>